<evidence type="ECO:0000255" key="1">
    <source>
        <dbReference type="HAMAP-Rule" id="MF_01227"/>
    </source>
</evidence>
<comment type="function">
    <text evidence="1">Catalyzes the ATP-dependent amination of UTP to CTP with either L-glutamine or ammonia as the source of nitrogen. Regulates intracellular CTP levels through interactions with the four ribonucleotide triphosphates.</text>
</comment>
<comment type="catalytic activity">
    <reaction evidence="1">
        <text>UTP + L-glutamine + ATP + H2O = CTP + L-glutamate + ADP + phosphate + 2 H(+)</text>
        <dbReference type="Rhea" id="RHEA:26426"/>
        <dbReference type="ChEBI" id="CHEBI:15377"/>
        <dbReference type="ChEBI" id="CHEBI:15378"/>
        <dbReference type="ChEBI" id="CHEBI:29985"/>
        <dbReference type="ChEBI" id="CHEBI:30616"/>
        <dbReference type="ChEBI" id="CHEBI:37563"/>
        <dbReference type="ChEBI" id="CHEBI:43474"/>
        <dbReference type="ChEBI" id="CHEBI:46398"/>
        <dbReference type="ChEBI" id="CHEBI:58359"/>
        <dbReference type="ChEBI" id="CHEBI:456216"/>
        <dbReference type="EC" id="6.3.4.2"/>
    </reaction>
</comment>
<comment type="catalytic activity">
    <reaction evidence="1">
        <text>L-glutamine + H2O = L-glutamate + NH4(+)</text>
        <dbReference type="Rhea" id="RHEA:15889"/>
        <dbReference type="ChEBI" id="CHEBI:15377"/>
        <dbReference type="ChEBI" id="CHEBI:28938"/>
        <dbReference type="ChEBI" id="CHEBI:29985"/>
        <dbReference type="ChEBI" id="CHEBI:58359"/>
    </reaction>
</comment>
<comment type="catalytic activity">
    <reaction evidence="1">
        <text>UTP + NH4(+) + ATP = CTP + ADP + phosphate + 2 H(+)</text>
        <dbReference type="Rhea" id="RHEA:16597"/>
        <dbReference type="ChEBI" id="CHEBI:15378"/>
        <dbReference type="ChEBI" id="CHEBI:28938"/>
        <dbReference type="ChEBI" id="CHEBI:30616"/>
        <dbReference type="ChEBI" id="CHEBI:37563"/>
        <dbReference type="ChEBI" id="CHEBI:43474"/>
        <dbReference type="ChEBI" id="CHEBI:46398"/>
        <dbReference type="ChEBI" id="CHEBI:456216"/>
    </reaction>
</comment>
<comment type="activity regulation">
    <text evidence="1">Allosterically activated by GTP, when glutamine is the substrate; GTP has no effect on the reaction when ammonia is the substrate. The allosteric effector GTP functions by stabilizing the protein conformation that binds the tetrahedral intermediate(s) formed during glutamine hydrolysis. Inhibited by the product CTP, via allosteric rather than competitive inhibition.</text>
</comment>
<comment type="pathway">
    <text evidence="1">Pyrimidine metabolism; CTP biosynthesis via de novo pathway; CTP from UDP: step 2/2.</text>
</comment>
<comment type="subunit">
    <text evidence="1">Homotetramer.</text>
</comment>
<comment type="miscellaneous">
    <text evidence="1">CTPSs have evolved a hybrid strategy for distinguishing between UTP and CTP. The overlapping regions of the product feedback inhibitory and substrate sites recognize a common feature in both compounds, the triphosphate moiety. To differentiate isosteric substrate and product pyrimidine rings, an additional pocket far from the expected kinase/ligase catalytic site, specifically recognizes the cytosine and ribose portions of the product inhibitor.</text>
</comment>
<comment type="similarity">
    <text evidence="1">Belongs to the CTP synthase family.</text>
</comment>
<name>PYRG_CHLTE</name>
<protein>
    <recommendedName>
        <fullName evidence="1">CTP synthase</fullName>
        <ecNumber evidence="1">6.3.4.2</ecNumber>
    </recommendedName>
    <alternativeName>
        <fullName evidence="1">Cytidine 5'-triphosphate synthase</fullName>
    </alternativeName>
    <alternativeName>
        <fullName evidence="1">Cytidine triphosphate synthetase</fullName>
        <shortName evidence="1">CTP synthetase</shortName>
        <shortName evidence="1">CTPS</shortName>
    </alternativeName>
    <alternativeName>
        <fullName evidence="1">UTP--ammonia ligase</fullName>
    </alternativeName>
</protein>
<accession>P59040</accession>
<sequence length="565" mass="63831">MARPKNVKHIFVTGGVISSLGKGILSASLGLLLKSRGLRVAIQKYDPYINVDPGTMSPYQHGEVYVTDDGAETDLDLGHYERFLDEPTSQACNLTMGRVYKSVIDKERRGEYLGGTVQVVPHVIDEIKEKMGDLAKNGSIDVLITEIGGTIGDIESLPFLEAMRQLKLELGEHNLLNIHLTFVPYIKAASELKTKPTQHSVKMLLETGIQPDILVCRSEKPLSREIKNKVGHFCNVHDLDVIGLNDCDTIYEVPLMLLKEQLDLRVMKKLGLKKFREPNLEYWKNFCEKVKHPKDGEITIGICGKYTEYPDAYKSIIESFIHAGASNDVRVLVKMLRAEDAEDPKFDISSAFKGISGLLVAPGFGDRGIEGKVRFVQYARENNIPFFGICLGMQCATIEFARNICDLPDANSTEFNKRTRFPVIDLMEHQKKVKEKGGTMRLGSYPCILKEGSKAHELYGKFLINERHRHRYEFNNQFRKLFEEKGMIFSGTSPNGDLVEIVELKNHRWFVAVQFHPELKSRVQKVHPLFDGFVHAAKEFAQGKRQLSLEVEMPRLSSTEMENAG</sequence>
<proteinExistence type="inferred from homology"/>
<keyword id="KW-0067">ATP-binding</keyword>
<keyword id="KW-0315">Glutamine amidotransferase</keyword>
<keyword id="KW-0436">Ligase</keyword>
<keyword id="KW-0460">Magnesium</keyword>
<keyword id="KW-0479">Metal-binding</keyword>
<keyword id="KW-0547">Nucleotide-binding</keyword>
<keyword id="KW-0665">Pyrimidine biosynthesis</keyword>
<keyword id="KW-1185">Reference proteome</keyword>
<gene>
    <name evidence="1" type="primary">pyrG</name>
    <name type="ordered locus">CT0142</name>
</gene>
<reference key="1">
    <citation type="journal article" date="2002" name="Proc. Natl. Acad. Sci. U.S.A.">
        <title>The complete genome sequence of Chlorobium tepidum TLS, a photosynthetic, anaerobic, green-sulfur bacterium.</title>
        <authorList>
            <person name="Eisen J.A."/>
            <person name="Nelson K.E."/>
            <person name="Paulsen I.T."/>
            <person name="Heidelberg J.F."/>
            <person name="Wu M."/>
            <person name="Dodson R.J."/>
            <person name="DeBoy R.T."/>
            <person name="Gwinn M.L."/>
            <person name="Nelson W.C."/>
            <person name="Haft D.H."/>
            <person name="Hickey E.K."/>
            <person name="Peterson J.D."/>
            <person name="Durkin A.S."/>
            <person name="Kolonay J.F."/>
            <person name="Yang F."/>
            <person name="Holt I.E."/>
            <person name="Umayam L.A."/>
            <person name="Mason T.M."/>
            <person name="Brenner M."/>
            <person name="Shea T.P."/>
            <person name="Parksey D.S."/>
            <person name="Nierman W.C."/>
            <person name="Feldblyum T.V."/>
            <person name="Hansen C.L."/>
            <person name="Craven M.B."/>
            <person name="Radune D."/>
            <person name="Vamathevan J.J."/>
            <person name="Khouri H.M."/>
            <person name="White O."/>
            <person name="Gruber T.M."/>
            <person name="Ketchum K.A."/>
            <person name="Venter J.C."/>
            <person name="Tettelin H."/>
            <person name="Bryant D.A."/>
            <person name="Fraser C.M."/>
        </authorList>
    </citation>
    <scope>NUCLEOTIDE SEQUENCE [LARGE SCALE GENOMIC DNA]</scope>
    <source>
        <strain>ATCC 49652 / DSM 12025 / NBRC 103806 / TLS</strain>
    </source>
</reference>
<dbReference type="EC" id="6.3.4.2" evidence="1"/>
<dbReference type="EMBL" id="AE006470">
    <property type="protein sequence ID" value="AAM71390.1"/>
    <property type="molecule type" value="Genomic_DNA"/>
</dbReference>
<dbReference type="RefSeq" id="NP_661048.1">
    <property type="nucleotide sequence ID" value="NC_002932.3"/>
</dbReference>
<dbReference type="RefSeq" id="WP_010931836.1">
    <property type="nucleotide sequence ID" value="NC_002932.3"/>
</dbReference>
<dbReference type="SMR" id="P59040"/>
<dbReference type="STRING" id="194439.CT0142"/>
<dbReference type="EnsemblBacteria" id="AAM71390">
    <property type="protein sequence ID" value="AAM71390"/>
    <property type="gene ID" value="CT0142"/>
</dbReference>
<dbReference type="KEGG" id="cte:CT0142"/>
<dbReference type="PATRIC" id="fig|194439.7.peg.139"/>
<dbReference type="eggNOG" id="COG0504">
    <property type="taxonomic scope" value="Bacteria"/>
</dbReference>
<dbReference type="HOGENOM" id="CLU_011675_5_0_10"/>
<dbReference type="OrthoDB" id="9801107at2"/>
<dbReference type="UniPathway" id="UPA00159">
    <property type="reaction ID" value="UER00277"/>
</dbReference>
<dbReference type="Proteomes" id="UP000001007">
    <property type="component" value="Chromosome"/>
</dbReference>
<dbReference type="GO" id="GO:0005829">
    <property type="term" value="C:cytosol"/>
    <property type="evidence" value="ECO:0007669"/>
    <property type="project" value="TreeGrafter"/>
</dbReference>
<dbReference type="GO" id="GO:0005524">
    <property type="term" value="F:ATP binding"/>
    <property type="evidence" value="ECO:0007669"/>
    <property type="project" value="UniProtKB-KW"/>
</dbReference>
<dbReference type="GO" id="GO:0003883">
    <property type="term" value="F:CTP synthase activity"/>
    <property type="evidence" value="ECO:0007669"/>
    <property type="project" value="UniProtKB-UniRule"/>
</dbReference>
<dbReference type="GO" id="GO:0004359">
    <property type="term" value="F:glutaminase activity"/>
    <property type="evidence" value="ECO:0007669"/>
    <property type="project" value="RHEA"/>
</dbReference>
<dbReference type="GO" id="GO:0042802">
    <property type="term" value="F:identical protein binding"/>
    <property type="evidence" value="ECO:0007669"/>
    <property type="project" value="TreeGrafter"/>
</dbReference>
<dbReference type="GO" id="GO:0046872">
    <property type="term" value="F:metal ion binding"/>
    <property type="evidence" value="ECO:0007669"/>
    <property type="project" value="UniProtKB-KW"/>
</dbReference>
<dbReference type="GO" id="GO:0044210">
    <property type="term" value="P:'de novo' CTP biosynthetic process"/>
    <property type="evidence" value="ECO:0007669"/>
    <property type="project" value="UniProtKB-UniRule"/>
</dbReference>
<dbReference type="GO" id="GO:0019856">
    <property type="term" value="P:pyrimidine nucleobase biosynthetic process"/>
    <property type="evidence" value="ECO:0007669"/>
    <property type="project" value="TreeGrafter"/>
</dbReference>
<dbReference type="CDD" id="cd03113">
    <property type="entry name" value="CTPS_N"/>
    <property type="match status" value="1"/>
</dbReference>
<dbReference type="CDD" id="cd01746">
    <property type="entry name" value="GATase1_CTP_Synthase"/>
    <property type="match status" value="1"/>
</dbReference>
<dbReference type="FunFam" id="3.40.50.300:FF:000009">
    <property type="entry name" value="CTP synthase"/>
    <property type="match status" value="1"/>
</dbReference>
<dbReference type="FunFam" id="3.40.50.880:FF:000002">
    <property type="entry name" value="CTP synthase"/>
    <property type="match status" value="1"/>
</dbReference>
<dbReference type="Gene3D" id="3.40.50.880">
    <property type="match status" value="1"/>
</dbReference>
<dbReference type="Gene3D" id="3.40.50.300">
    <property type="entry name" value="P-loop containing nucleotide triphosphate hydrolases"/>
    <property type="match status" value="1"/>
</dbReference>
<dbReference type="HAMAP" id="MF_01227">
    <property type="entry name" value="PyrG"/>
    <property type="match status" value="1"/>
</dbReference>
<dbReference type="InterPro" id="IPR029062">
    <property type="entry name" value="Class_I_gatase-like"/>
</dbReference>
<dbReference type="InterPro" id="IPR004468">
    <property type="entry name" value="CTP_synthase"/>
</dbReference>
<dbReference type="InterPro" id="IPR017456">
    <property type="entry name" value="CTP_synthase_N"/>
</dbReference>
<dbReference type="InterPro" id="IPR017926">
    <property type="entry name" value="GATASE"/>
</dbReference>
<dbReference type="InterPro" id="IPR033828">
    <property type="entry name" value="GATase1_CTP_Synthase"/>
</dbReference>
<dbReference type="InterPro" id="IPR027417">
    <property type="entry name" value="P-loop_NTPase"/>
</dbReference>
<dbReference type="NCBIfam" id="NF003792">
    <property type="entry name" value="PRK05380.1"/>
    <property type="match status" value="1"/>
</dbReference>
<dbReference type="NCBIfam" id="TIGR00337">
    <property type="entry name" value="PyrG"/>
    <property type="match status" value="1"/>
</dbReference>
<dbReference type="PANTHER" id="PTHR11550">
    <property type="entry name" value="CTP SYNTHASE"/>
    <property type="match status" value="1"/>
</dbReference>
<dbReference type="PANTHER" id="PTHR11550:SF0">
    <property type="entry name" value="CTP SYNTHASE-RELATED"/>
    <property type="match status" value="1"/>
</dbReference>
<dbReference type="Pfam" id="PF06418">
    <property type="entry name" value="CTP_synth_N"/>
    <property type="match status" value="1"/>
</dbReference>
<dbReference type="Pfam" id="PF00117">
    <property type="entry name" value="GATase"/>
    <property type="match status" value="1"/>
</dbReference>
<dbReference type="SUPFAM" id="SSF52317">
    <property type="entry name" value="Class I glutamine amidotransferase-like"/>
    <property type="match status" value="1"/>
</dbReference>
<dbReference type="SUPFAM" id="SSF52540">
    <property type="entry name" value="P-loop containing nucleoside triphosphate hydrolases"/>
    <property type="match status" value="1"/>
</dbReference>
<dbReference type="PROSITE" id="PS51273">
    <property type="entry name" value="GATASE_TYPE_1"/>
    <property type="match status" value="1"/>
</dbReference>
<organism>
    <name type="scientific">Chlorobaculum tepidum (strain ATCC 49652 / DSM 12025 / NBRC 103806 / TLS)</name>
    <name type="common">Chlorobium tepidum</name>
    <dbReference type="NCBI Taxonomy" id="194439"/>
    <lineage>
        <taxon>Bacteria</taxon>
        <taxon>Pseudomonadati</taxon>
        <taxon>Chlorobiota</taxon>
        <taxon>Chlorobiia</taxon>
        <taxon>Chlorobiales</taxon>
        <taxon>Chlorobiaceae</taxon>
        <taxon>Chlorobaculum</taxon>
    </lineage>
</organism>
<feature type="chain" id="PRO_0000138177" description="CTP synthase">
    <location>
        <begin position="1"/>
        <end position="565"/>
    </location>
</feature>
<feature type="domain" description="Glutamine amidotransferase type-1" evidence="1">
    <location>
        <begin position="299"/>
        <end position="543"/>
    </location>
</feature>
<feature type="region of interest" description="Amidoligase domain" evidence="1">
    <location>
        <begin position="1"/>
        <end position="272"/>
    </location>
</feature>
<feature type="active site" description="Nucleophile; for glutamine hydrolysis" evidence="1">
    <location>
        <position position="390"/>
    </location>
</feature>
<feature type="active site" evidence="1">
    <location>
        <position position="516"/>
    </location>
</feature>
<feature type="active site" evidence="1">
    <location>
        <position position="518"/>
    </location>
</feature>
<feature type="binding site" evidence="1">
    <location>
        <position position="18"/>
    </location>
    <ligand>
        <name>CTP</name>
        <dbReference type="ChEBI" id="CHEBI:37563"/>
        <note>allosteric inhibitor</note>
    </ligand>
</feature>
<feature type="binding site" evidence="1">
    <location>
        <position position="18"/>
    </location>
    <ligand>
        <name>UTP</name>
        <dbReference type="ChEBI" id="CHEBI:46398"/>
    </ligand>
</feature>
<feature type="binding site" evidence="1">
    <location>
        <begin position="19"/>
        <end position="24"/>
    </location>
    <ligand>
        <name>ATP</name>
        <dbReference type="ChEBI" id="CHEBI:30616"/>
    </ligand>
</feature>
<feature type="binding site" evidence="1">
    <location>
        <position position="59"/>
    </location>
    <ligand>
        <name>L-glutamine</name>
        <dbReference type="ChEBI" id="CHEBI:58359"/>
    </ligand>
</feature>
<feature type="binding site" evidence="1">
    <location>
        <position position="76"/>
    </location>
    <ligand>
        <name>ATP</name>
        <dbReference type="ChEBI" id="CHEBI:30616"/>
    </ligand>
</feature>
<feature type="binding site" evidence="1">
    <location>
        <position position="76"/>
    </location>
    <ligand>
        <name>Mg(2+)</name>
        <dbReference type="ChEBI" id="CHEBI:18420"/>
    </ligand>
</feature>
<feature type="binding site" evidence="1">
    <location>
        <position position="146"/>
    </location>
    <ligand>
        <name>Mg(2+)</name>
        <dbReference type="ChEBI" id="CHEBI:18420"/>
    </ligand>
</feature>
<feature type="binding site" evidence="1">
    <location>
        <begin position="153"/>
        <end position="155"/>
    </location>
    <ligand>
        <name>CTP</name>
        <dbReference type="ChEBI" id="CHEBI:37563"/>
        <note>allosteric inhibitor</note>
    </ligand>
</feature>
<feature type="binding site" evidence="1">
    <location>
        <begin position="193"/>
        <end position="198"/>
    </location>
    <ligand>
        <name>CTP</name>
        <dbReference type="ChEBI" id="CHEBI:37563"/>
        <note>allosteric inhibitor</note>
    </ligand>
</feature>
<feature type="binding site" evidence="1">
    <location>
        <begin position="193"/>
        <end position="198"/>
    </location>
    <ligand>
        <name>UTP</name>
        <dbReference type="ChEBI" id="CHEBI:46398"/>
    </ligand>
</feature>
<feature type="binding site" evidence="1">
    <location>
        <position position="229"/>
    </location>
    <ligand>
        <name>CTP</name>
        <dbReference type="ChEBI" id="CHEBI:37563"/>
        <note>allosteric inhibitor</note>
    </ligand>
</feature>
<feature type="binding site" evidence="1">
    <location>
        <position position="229"/>
    </location>
    <ligand>
        <name>UTP</name>
        <dbReference type="ChEBI" id="CHEBI:46398"/>
    </ligand>
</feature>
<feature type="binding site" evidence="1">
    <location>
        <position position="363"/>
    </location>
    <ligand>
        <name>L-glutamine</name>
        <dbReference type="ChEBI" id="CHEBI:58359"/>
    </ligand>
</feature>
<feature type="binding site" evidence="1">
    <location>
        <begin position="391"/>
        <end position="394"/>
    </location>
    <ligand>
        <name>L-glutamine</name>
        <dbReference type="ChEBI" id="CHEBI:58359"/>
    </ligand>
</feature>
<feature type="binding site" evidence="1">
    <location>
        <position position="414"/>
    </location>
    <ligand>
        <name>L-glutamine</name>
        <dbReference type="ChEBI" id="CHEBI:58359"/>
    </ligand>
</feature>
<feature type="binding site" evidence="1">
    <location>
        <position position="471"/>
    </location>
    <ligand>
        <name>L-glutamine</name>
        <dbReference type="ChEBI" id="CHEBI:58359"/>
    </ligand>
</feature>